<evidence type="ECO:0000250" key="1">
    <source>
        <dbReference type="UniProtKB" id="P31129"/>
    </source>
</evidence>
<evidence type="ECO:0000250" key="2">
    <source>
        <dbReference type="UniProtKB" id="P77302"/>
    </source>
</evidence>
<evidence type="ECO:0000255" key="3"/>
<evidence type="ECO:0000255" key="4">
    <source>
        <dbReference type="PROSITE-ProRule" id="PRU00095"/>
    </source>
</evidence>
<evidence type="ECO:0000255" key="5">
    <source>
        <dbReference type="PROSITE-ProRule" id="PRU00141"/>
    </source>
</evidence>
<evidence type="ECO:0000305" key="6"/>
<protein>
    <recommendedName>
        <fullName evidence="2">Diguanylate cyclase DgcM</fullName>
        <shortName evidence="2">DGC</shortName>
        <ecNumber evidence="2">2.7.7.65</ecNumber>
    </recommendedName>
</protein>
<organism>
    <name type="scientific">Escherichia coli O157:H7</name>
    <dbReference type="NCBI Taxonomy" id="83334"/>
    <lineage>
        <taxon>Bacteria</taxon>
        <taxon>Pseudomonadati</taxon>
        <taxon>Pseudomonadota</taxon>
        <taxon>Gammaproteobacteria</taxon>
        <taxon>Enterobacterales</taxon>
        <taxon>Enterobacteriaceae</taxon>
        <taxon>Escherichia</taxon>
    </lineage>
</organism>
<gene>
    <name evidence="2" type="primary">dgcM</name>
    <name type="synonym">ydaM</name>
    <name type="ordered locus">Z2421</name>
    <name type="ordered locus">ECs1925</name>
</gene>
<reference key="1">
    <citation type="journal article" date="2001" name="Nature">
        <title>Genome sequence of enterohaemorrhagic Escherichia coli O157:H7.</title>
        <authorList>
            <person name="Perna N.T."/>
            <person name="Plunkett G. III"/>
            <person name="Burland V."/>
            <person name="Mau B."/>
            <person name="Glasner J.D."/>
            <person name="Rose D.J."/>
            <person name="Mayhew G.F."/>
            <person name="Evans P.S."/>
            <person name="Gregor J."/>
            <person name="Kirkpatrick H.A."/>
            <person name="Posfai G."/>
            <person name="Hackett J."/>
            <person name="Klink S."/>
            <person name="Boutin A."/>
            <person name="Shao Y."/>
            <person name="Miller L."/>
            <person name="Grotbeck E.J."/>
            <person name="Davis N.W."/>
            <person name="Lim A."/>
            <person name="Dimalanta E.T."/>
            <person name="Potamousis K."/>
            <person name="Apodaca J."/>
            <person name="Anantharaman T.S."/>
            <person name="Lin J."/>
            <person name="Yen G."/>
            <person name="Schwartz D.C."/>
            <person name="Welch R.A."/>
            <person name="Blattner F.R."/>
        </authorList>
    </citation>
    <scope>NUCLEOTIDE SEQUENCE [LARGE SCALE GENOMIC DNA]</scope>
    <source>
        <strain>O157:H7 / EDL933 / ATCC 700927 / EHEC</strain>
    </source>
</reference>
<reference key="2">
    <citation type="journal article" date="2001" name="DNA Res.">
        <title>Complete genome sequence of enterohemorrhagic Escherichia coli O157:H7 and genomic comparison with a laboratory strain K-12.</title>
        <authorList>
            <person name="Hayashi T."/>
            <person name="Makino K."/>
            <person name="Ohnishi M."/>
            <person name="Kurokawa K."/>
            <person name="Ishii K."/>
            <person name="Yokoyama K."/>
            <person name="Han C.-G."/>
            <person name="Ohtsubo E."/>
            <person name="Nakayama K."/>
            <person name="Murata T."/>
            <person name="Tanaka M."/>
            <person name="Tobe T."/>
            <person name="Iida T."/>
            <person name="Takami H."/>
            <person name="Honda T."/>
            <person name="Sasakawa C."/>
            <person name="Ogasawara N."/>
            <person name="Yasunaga T."/>
            <person name="Kuhara S."/>
            <person name="Shiba T."/>
            <person name="Hattori M."/>
            <person name="Shinagawa H."/>
        </authorList>
    </citation>
    <scope>NUCLEOTIDE SEQUENCE [LARGE SCALE GENOMIC DNA]</scope>
    <source>
        <strain>O157:H7 / Sakai / RIMD 0509952 / EHEC</strain>
    </source>
</reference>
<name>DGCM_ECO57</name>
<accession>Q8X8Q3</accession>
<comment type="function">
    <text evidence="2">Part of a signaling cascade that regulates curli biosynthesis. The cascade is composed of two cyclic-di-GMP (c-di-GMP) control modules, in which c-di-GMP controlled by the DgcE/PdeH pair (module I) regulates the activity of the DgcM/PdeR pair (module II), which in turn regulates activity of the transcription factor MlrA and expression of the master biofilm regulator csgD.</text>
</comment>
<comment type="catalytic activity">
    <reaction evidence="2">
        <text>2 GTP = 3',3'-c-di-GMP + 2 diphosphate</text>
        <dbReference type="Rhea" id="RHEA:24898"/>
        <dbReference type="ChEBI" id="CHEBI:33019"/>
        <dbReference type="ChEBI" id="CHEBI:37565"/>
        <dbReference type="ChEBI" id="CHEBI:58805"/>
        <dbReference type="EC" id="2.7.7.65"/>
    </reaction>
</comment>
<comment type="cofactor">
    <cofactor evidence="1">
        <name>Mg(2+)</name>
        <dbReference type="ChEBI" id="CHEBI:18420"/>
    </cofactor>
    <text evidence="1">Binds 1 Mg(2+) ion per monomer.</text>
</comment>
<comment type="pathway">
    <text evidence="2">Purine metabolism; 3',5'-cyclic di-GMP biosynthesis.</text>
</comment>
<comment type="sequence caution" evidence="6">
    <conflict type="erroneous initiation">
        <sequence resource="EMBL-CDS" id="AAG56456"/>
    </conflict>
    <text>Extended N-terminus.</text>
</comment>
<feature type="chain" id="PRO_0000201314" description="Diguanylate cyclase DgcM">
    <location>
        <begin position="1"/>
        <end position="410"/>
    </location>
</feature>
<feature type="domain" description="PAS 1" evidence="3">
    <location>
        <begin position="3"/>
        <end position="70"/>
    </location>
</feature>
<feature type="domain" description="PAS 2" evidence="3">
    <location>
        <begin position="129"/>
        <end position="198"/>
    </location>
</feature>
<feature type="domain" description="PAC" evidence="5">
    <location>
        <begin position="199"/>
        <end position="251"/>
    </location>
</feature>
<feature type="domain" description="GGDEF" evidence="4">
    <location>
        <begin position="283"/>
        <end position="410"/>
    </location>
</feature>
<feature type="active site" description="Proton acceptor" evidence="3">
    <location>
        <position position="334"/>
    </location>
</feature>
<feature type="binding site" evidence="1">
    <location>
        <position position="291"/>
    </location>
    <ligand>
        <name>Mg(2+)</name>
        <dbReference type="ChEBI" id="CHEBI:18420"/>
    </ligand>
</feature>
<feature type="binding site" evidence="1">
    <location>
        <position position="299"/>
    </location>
    <ligand>
        <name>substrate</name>
    </ligand>
</feature>
<feature type="binding site" evidence="1">
    <location>
        <position position="304"/>
    </location>
    <ligand>
        <name>substrate</name>
    </ligand>
</feature>
<feature type="binding site" evidence="1">
    <location>
        <position position="308"/>
    </location>
    <ligand>
        <name>substrate</name>
    </ligand>
</feature>
<feature type="binding site" evidence="1">
    <location>
        <position position="334"/>
    </location>
    <ligand>
        <name>Mg(2+)</name>
        <dbReference type="ChEBI" id="CHEBI:18420"/>
    </ligand>
</feature>
<feature type="site" description="Transition state stabilizer" evidence="3">
    <location>
        <position position="296"/>
    </location>
</feature>
<keyword id="KW-0342">GTP-binding</keyword>
<keyword id="KW-0460">Magnesium</keyword>
<keyword id="KW-0479">Metal-binding</keyword>
<keyword id="KW-0547">Nucleotide-binding</keyword>
<keyword id="KW-1185">Reference proteome</keyword>
<keyword id="KW-0677">Repeat</keyword>
<keyword id="KW-0808">Transferase</keyword>
<dbReference type="EC" id="2.7.7.65" evidence="2"/>
<dbReference type="EMBL" id="AE005174">
    <property type="protein sequence ID" value="AAG56456.1"/>
    <property type="status" value="ALT_INIT"/>
    <property type="molecule type" value="Genomic_DNA"/>
</dbReference>
<dbReference type="EMBL" id="BA000007">
    <property type="protein sequence ID" value="BAB35348.2"/>
    <property type="molecule type" value="Genomic_DNA"/>
</dbReference>
<dbReference type="PIR" id="D85749">
    <property type="entry name" value="D85749"/>
</dbReference>
<dbReference type="PIR" id="E90869">
    <property type="entry name" value="E90869"/>
</dbReference>
<dbReference type="RefSeq" id="NP_309952.2">
    <property type="nucleotide sequence ID" value="NC_002695.1"/>
</dbReference>
<dbReference type="RefSeq" id="WP_000628061.1">
    <property type="nucleotide sequence ID" value="NZ_SEKU01000010.1"/>
</dbReference>
<dbReference type="SMR" id="Q8X8Q3"/>
<dbReference type="STRING" id="155864.Z2421"/>
<dbReference type="GeneID" id="912323"/>
<dbReference type="KEGG" id="ece:Z2421"/>
<dbReference type="KEGG" id="ecs:ECs_1925"/>
<dbReference type="PATRIC" id="fig|386585.9.peg.2032"/>
<dbReference type="eggNOG" id="COG3706">
    <property type="taxonomic scope" value="Bacteria"/>
</dbReference>
<dbReference type="HOGENOM" id="CLU_000445_11_4_6"/>
<dbReference type="OMA" id="HTWEINT"/>
<dbReference type="UniPathway" id="UPA00599"/>
<dbReference type="Proteomes" id="UP000000558">
    <property type="component" value="Chromosome"/>
</dbReference>
<dbReference type="Proteomes" id="UP000002519">
    <property type="component" value="Chromosome"/>
</dbReference>
<dbReference type="GO" id="GO:0005886">
    <property type="term" value="C:plasma membrane"/>
    <property type="evidence" value="ECO:0007669"/>
    <property type="project" value="TreeGrafter"/>
</dbReference>
<dbReference type="GO" id="GO:0052621">
    <property type="term" value="F:diguanylate cyclase activity"/>
    <property type="evidence" value="ECO:0007669"/>
    <property type="project" value="UniProtKB-EC"/>
</dbReference>
<dbReference type="GO" id="GO:0005525">
    <property type="term" value="F:GTP binding"/>
    <property type="evidence" value="ECO:0007669"/>
    <property type="project" value="UniProtKB-KW"/>
</dbReference>
<dbReference type="GO" id="GO:0046872">
    <property type="term" value="F:metal ion binding"/>
    <property type="evidence" value="ECO:0007669"/>
    <property type="project" value="UniProtKB-KW"/>
</dbReference>
<dbReference type="GO" id="GO:0043709">
    <property type="term" value="P:cell adhesion involved in single-species biofilm formation"/>
    <property type="evidence" value="ECO:0007669"/>
    <property type="project" value="TreeGrafter"/>
</dbReference>
<dbReference type="GO" id="GO:1902201">
    <property type="term" value="P:negative regulation of bacterial-type flagellum-dependent cell motility"/>
    <property type="evidence" value="ECO:0007669"/>
    <property type="project" value="TreeGrafter"/>
</dbReference>
<dbReference type="CDD" id="cd01949">
    <property type="entry name" value="GGDEF"/>
    <property type="match status" value="1"/>
</dbReference>
<dbReference type="CDD" id="cd00130">
    <property type="entry name" value="PAS"/>
    <property type="match status" value="1"/>
</dbReference>
<dbReference type="FunFam" id="3.30.70.270:FF:000001">
    <property type="entry name" value="Diguanylate cyclase domain protein"/>
    <property type="match status" value="1"/>
</dbReference>
<dbReference type="Gene3D" id="3.30.70.270">
    <property type="match status" value="1"/>
</dbReference>
<dbReference type="Gene3D" id="3.30.450.20">
    <property type="entry name" value="PAS domain"/>
    <property type="match status" value="1"/>
</dbReference>
<dbReference type="InterPro" id="IPR050469">
    <property type="entry name" value="Diguanylate_Cyclase"/>
</dbReference>
<dbReference type="InterPro" id="IPR000160">
    <property type="entry name" value="GGDEF_dom"/>
</dbReference>
<dbReference type="InterPro" id="IPR029787">
    <property type="entry name" value="Nucleotide_cyclase"/>
</dbReference>
<dbReference type="InterPro" id="IPR000014">
    <property type="entry name" value="PAS"/>
</dbReference>
<dbReference type="InterPro" id="IPR000700">
    <property type="entry name" value="PAS-assoc_C"/>
</dbReference>
<dbReference type="InterPro" id="IPR035965">
    <property type="entry name" value="PAS-like_dom_sf"/>
</dbReference>
<dbReference type="InterPro" id="IPR013656">
    <property type="entry name" value="PAS_4"/>
</dbReference>
<dbReference type="InterPro" id="IPR043128">
    <property type="entry name" value="Rev_trsase/Diguanyl_cyclase"/>
</dbReference>
<dbReference type="NCBIfam" id="TIGR00254">
    <property type="entry name" value="GGDEF"/>
    <property type="match status" value="1"/>
</dbReference>
<dbReference type="NCBIfam" id="TIGR00229">
    <property type="entry name" value="sensory_box"/>
    <property type="match status" value="1"/>
</dbReference>
<dbReference type="PANTHER" id="PTHR45138:SF9">
    <property type="entry name" value="DIGUANYLATE CYCLASE DGCM-RELATED"/>
    <property type="match status" value="1"/>
</dbReference>
<dbReference type="PANTHER" id="PTHR45138">
    <property type="entry name" value="REGULATORY COMPONENTS OF SENSORY TRANSDUCTION SYSTEM"/>
    <property type="match status" value="1"/>
</dbReference>
<dbReference type="Pfam" id="PF00990">
    <property type="entry name" value="GGDEF"/>
    <property type="match status" value="1"/>
</dbReference>
<dbReference type="Pfam" id="PF08448">
    <property type="entry name" value="PAS_4"/>
    <property type="match status" value="1"/>
</dbReference>
<dbReference type="SMART" id="SM00267">
    <property type="entry name" value="GGDEF"/>
    <property type="match status" value="1"/>
</dbReference>
<dbReference type="SMART" id="SM00091">
    <property type="entry name" value="PAS"/>
    <property type="match status" value="2"/>
</dbReference>
<dbReference type="SUPFAM" id="SSF55073">
    <property type="entry name" value="Nucleotide cyclase"/>
    <property type="match status" value="1"/>
</dbReference>
<dbReference type="SUPFAM" id="SSF55785">
    <property type="entry name" value="PYP-like sensor domain (PAS domain)"/>
    <property type="match status" value="1"/>
</dbReference>
<dbReference type="PROSITE" id="PS50887">
    <property type="entry name" value="GGDEF"/>
    <property type="match status" value="1"/>
</dbReference>
<dbReference type="PROSITE" id="PS50113">
    <property type="entry name" value="PAC"/>
    <property type="match status" value="1"/>
</dbReference>
<proteinExistence type="inferred from homology"/>
<sequence length="410" mass="46495">MITHNFNTLDLLTSPVWIVSPFEEQLIYANSAARLLMQDLTFSQLRTGPYSVSSQKELPKYLSDLQNQHDIIEILTVQRKEEETALSCRLVLRELTETEPVIIFEGIEAPATLGLKASRSANYQRKKQGFYARFFLTNSAPMLLIDPSRDGQIVDANLAALNFYGYNHETMCQKHTWEINMLGRRVMPIMHEISHLPGGHKPLNFIHKLADGSTRHVQTYAGPIEIYGDKLMLCIVHDITEQKRLEEQLEHAAHHDAMTGLLNRRQFYHITEPGQMQHLAIAQDYSLLLIDTDRFKHINDLYGHSKGDEVLCALARTLESCARKGDLVFRWGGEEFVLLLPRTPLDTALSLAETIRVSVAKVSISGLPRFTVSIGVAHHEGNESIDELFKRVDDALYRAKNDGRNRVLAA</sequence>